<feature type="chain" id="PRO_0000230644" description="Large ribosomal subunit protein uL1">
    <location>
        <begin position="1"/>
        <end position="229"/>
    </location>
</feature>
<dbReference type="EMBL" id="CP000023">
    <property type="protein sequence ID" value="AAV61416.1"/>
    <property type="status" value="ALT_INIT"/>
    <property type="molecule type" value="Genomic_DNA"/>
</dbReference>
<dbReference type="RefSeq" id="WP_002946412.1">
    <property type="nucleotide sequence ID" value="NC_006448.1"/>
</dbReference>
<dbReference type="SMR" id="Q5M2K0"/>
<dbReference type="STRING" id="264199.stu1817"/>
<dbReference type="GeneID" id="66899553"/>
<dbReference type="KEGG" id="stl:stu1817"/>
<dbReference type="eggNOG" id="COG0081">
    <property type="taxonomic scope" value="Bacteria"/>
</dbReference>
<dbReference type="HOGENOM" id="CLU_062853_0_0_9"/>
<dbReference type="Proteomes" id="UP000001170">
    <property type="component" value="Chromosome"/>
</dbReference>
<dbReference type="GO" id="GO:0015934">
    <property type="term" value="C:large ribosomal subunit"/>
    <property type="evidence" value="ECO:0007669"/>
    <property type="project" value="InterPro"/>
</dbReference>
<dbReference type="GO" id="GO:0019843">
    <property type="term" value="F:rRNA binding"/>
    <property type="evidence" value="ECO:0007669"/>
    <property type="project" value="UniProtKB-UniRule"/>
</dbReference>
<dbReference type="GO" id="GO:0003735">
    <property type="term" value="F:structural constituent of ribosome"/>
    <property type="evidence" value="ECO:0007669"/>
    <property type="project" value="InterPro"/>
</dbReference>
<dbReference type="GO" id="GO:0000049">
    <property type="term" value="F:tRNA binding"/>
    <property type="evidence" value="ECO:0007669"/>
    <property type="project" value="UniProtKB-KW"/>
</dbReference>
<dbReference type="GO" id="GO:0006417">
    <property type="term" value="P:regulation of translation"/>
    <property type="evidence" value="ECO:0007669"/>
    <property type="project" value="UniProtKB-KW"/>
</dbReference>
<dbReference type="GO" id="GO:0006412">
    <property type="term" value="P:translation"/>
    <property type="evidence" value="ECO:0007669"/>
    <property type="project" value="UniProtKB-UniRule"/>
</dbReference>
<dbReference type="CDD" id="cd00403">
    <property type="entry name" value="Ribosomal_L1"/>
    <property type="match status" value="1"/>
</dbReference>
<dbReference type="FunFam" id="3.40.50.790:FF:000001">
    <property type="entry name" value="50S ribosomal protein L1"/>
    <property type="match status" value="1"/>
</dbReference>
<dbReference type="Gene3D" id="3.30.190.20">
    <property type="match status" value="1"/>
</dbReference>
<dbReference type="Gene3D" id="3.40.50.790">
    <property type="match status" value="1"/>
</dbReference>
<dbReference type="HAMAP" id="MF_01318_B">
    <property type="entry name" value="Ribosomal_uL1_B"/>
    <property type="match status" value="1"/>
</dbReference>
<dbReference type="InterPro" id="IPR005878">
    <property type="entry name" value="Ribosom_uL1_bac-type"/>
</dbReference>
<dbReference type="InterPro" id="IPR002143">
    <property type="entry name" value="Ribosomal_uL1"/>
</dbReference>
<dbReference type="InterPro" id="IPR023674">
    <property type="entry name" value="Ribosomal_uL1-like"/>
</dbReference>
<dbReference type="InterPro" id="IPR028364">
    <property type="entry name" value="Ribosomal_uL1/biogenesis"/>
</dbReference>
<dbReference type="InterPro" id="IPR016095">
    <property type="entry name" value="Ribosomal_uL1_3-a/b-sand"/>
</dbReference>
<dbReference type="InterPro" id="IPR023673">
    <property type="entry name" value="Ribosomal_uL1_CS"/>
</dbReference>
<dbReference type="NCBIfam" id="TIGR01169">
    <property type="entry name" value="rplA_bact"/>
    <property type="match status" value="1"/>
</dbReference>
<dbReference type="PANTHER" id="PTHR36427">
    <property type="entry name" value="54S RIBOSOMAL PROTEIN L1, MITOCHONDRIAL"/>
    <property type="match status" value="1"/>
</dbReference>
<dbReference type="PANTHER" id="PTHR36427:SF3">
    <property type="entry name" value="LARGE RIBOSOMAL SUBUNIT PROTEIN UL1M"/>
    <property type="match status" value="1"/>
</dbReference>
<dbReference type="Pfam" id="PF00687">
    <property type="entry name" value="Ribosomal_L1"/>
    <property type="match status" value="1"/>
</dbReference>
<dbReference type="PIRSF" id="PIRSF002155">
    <property type="entry name" value="Ribosomal_L1"/>
    <property type="match status" value="1"/>
</dbReference>
<dbReference type="SUPFAM" id="SSF56808">
    <property type="entry name" value="Ribosomal protein L1"/>
    <property type="match status" value="1"/>
</dbReference>
<dbReference type="PROSITE" id="PS01199">
    <property type="entry name" value="RIBOSOMAL_L1"/>
    <property type="match status" value="1"/>
</dbReference>
<sequence length="229" mass="24478">MAKKSKQMRAALEKIDSTKAYSVEEAVALAQETNFAKFDATVEVSYNLNIDVKKADQQIRGAMVLPNGTGKTQRVLVFARGAKAEEAKAAGADFVGEDELVDKINGGWLDFDVVVATPDMMAIVGRLGRVLGPRNLMPNPKTGTVTMDVAKAVEESKGGKITYRADKAGNVQAIIGKVSFEAEKLVENFKAFNDAIQKAKPATAKGVYITNLSITTTQGPGIKVDPNSL</sequence>
<comment type="function">
    <text evidence="1">Binds directly to 23S rRNA. The L1 stalk is quite mobile in the ribosome, and is involved in E site tRNA release.</text>
</comment>
<comment type="function">
    <text evidence="1">Protein L1 is also a translational repressor protein, it controls the translation of the L11 operon by binding to its mRNA.</text>
</comment>
<comment type="subunit">
    <text evidence="1">Part of the 50S ribosomal subunit.</text>
</comment>
<comment type="similarity">
    <text evidence="1">Belongs to the universal ribosomal protein uL1 family.</text>
</comment>
<comment type="sequence caution" evidence="2">
    <conflict type="erroneous initiation">
        <sequence resource="EMBL-CDS" id="AAV61416"/>
    </conflict>
</comment>
<accession>Q5M2K0</accession>
<keyword id="KW-1185">Reference proteome</keyword>
<keyword id="KW-0678">Repressor</keyword>
<keyword id="KW-0687">Ribonucleoprotein</keyword>
<keyword id="KW-0689">Ribosomal protein</keyword>
<keyword id="KW-0694">RNA-binding</keyword>
<keyword id="KW-0699">rRNA-binding</keyword>
<keyword id="KW-0810">Translation regulation</keyword>
<keyword id="KW-0820">tRNA-binding</keyword>
<reference key="1">
    <citation type="journal article" date="2004" name="Nat. Biotechnol.">
        <title>Complete sequence and comparative genome analysis of the dairy bacterium Streptococcus thermophilus.</title>
        <authorList>
            <person name="Bolotin A."/>
            <person name="Quinquis B."/>
            <person name="Renault P."/>
            <person name="Sorokin A."/>
            <person name="Ehrlich S.D."/>
            <person name="Kulakauskas S."/>
            <person name="Lapidus A."/>
            <person name="Goltsman E."/>
            <person name="Mazur M."/>
            <person name="Pusch G.D."/>
            <person name="Fonstein M."/>
            <person name="Overbeek R."/>
            <person name="Kyprides N."/>
            <person name="Purnelle B."/>
            <person name="Prozzi D."/>
            <person name="Ngui K."/>
            <person name="Masuy D."/>
            <person name="Hancy F."/>
            <person name="Burteau S."/>
            <person name="Boutry M."/>
            <person name="Delcour J."/>
            <person name="Goffeau A."/>
            <person name="Hols P."/>
        </authorList>
    </citation>
    <scope>NUCLEOTIDE SEQUENCE [LARGE SCALE GENOMIC DNA]</scope>
    <source>
        <strain>ATCC BAA-250 / LMG 18311</strain>
    </source>
</reference>
<protein>
    <recommendedName>
        <fullName evidence="1">Large ribosomal subunit protein uL1</fullName>
    </recommendedName>
    <alternativeName>
        <fullName evidence="2">50S ribosomal protein L1</fullName>
    </alternativeName>
</protein>
<proteinExistence type="inferred from homology"/>
<gene>
    <name evidence="1" type="primary">rplA</name>
    <name type="ordered locus">stu1817</name>
</gene>
<name>RL1_STRT2</name>
<evidence type="ECO:0000255" key="1">
    <source>
        <dbReference type="HAMAP-Rule" id="MF_01318"/>
    </source>
</evidence>
<evidence type="ECO:0000305" key="2"/>
<organism>
    <name type="scientific">Streptococcus thermophilus (strain ATCC BAA-250 / LMG 18311)</name>
    <dbReference type="NCBI Taxonomy" id="264199"/>
    <lineage>
        <taxon>Bacteria</taxon>
        <taxon>Bacillati</taxon>
        <taxon>Bacillota</taxon>
        <taxon>Bacilli</taxon>
        <taxon>Lactobacillales</taxon>
        <taxon>Streptococcaceae</taxon>
        <taxon>Streptococcus</taxon>
    </lineage>
</organism>